<accession>Q53705</accession>
<accession>P72361</accession>
<accession>Q2G1B5</accession>
<feature type="chain" id="PRO_0000074797" description="Sensor histidine kinase/phosphatase LytS">
    <location>
        <begin position="1"/>
        <end position="584"/>
    </location>
</feature>
<feature type="transmembrane region" description="Helical" evidence="1">
    <location>
        <begin position="6"/>
        <end position="28"/>
    </location>
</feature>
<feature type="transmembrane region" description="Helical" evidence="1">
    <location>
        <begin position="40"/>
        <end position="62"/>
    </location>
</feature>
<feature type="transmembrane region" description="Helical" evidence="1">
    <location>
        <begin position="88"/>
        <end position="110"/>
    </location>
</feature>
<feature type="transmembrane region" description="Helical" evidence="1">
    <location>
        <begin position="123"/>
        <end position="140"/>
    </location>
</feature>
<feature type="transmembrane region" description="Helical" evidence="1">
    <location>
        <begin position="155"/>
        <end position="172"/>
    </location>
</feature>
<feature type="transmembrane region" description="Helical" evidence="1">
    <location>
        <begin position="184"/>
        <end position="206"/>
    </location>
</feature>
<feature type="domain" description="GAF">
    <location>
        <begin position="311"/>
        <end position="362"/>
    </location>
</feature>
<feature type="domain" description="Histidine kinase">
    <location>
        <begin position="363"/>
        <end position="580"/>
    </location>
</feature>
<feature type="modified residue" description="Phosphohistidine; by autocatalysis" evidence="4">
    <location>
        <position position="390"/>
    </location>
</feature>
<feature type="mutagenesis site" description="Complete loss of autophosphorylation." evidence="4">
    <original>H</original>
    <variation>A</variation>
    <location>
        <position position="390"/>
    </location>
</feature>
<feature type="mutagenesis site" description="Abolishes phosphatase activity." evidence="4">
    <original>N</original>
    <variation>A</variation>
    <location>
        <position position="394"/>
    </location>
</feature>
<feature type="sequence conflict" description="In Ref. 1; AAB48182." evidence="6" ref="1">
    <original>T</original>
    <variation>P</variation>
    <location>
        <position position="198"/>
    </location>
</feature>
<feature type="sequence conflict" description="In Ref. 1; AAB48182." evidence="6" ref="1">
    <original>S</original>
    <variation>P</variation>
    <location>
        <position position="207"/>
    </location>
</feature>
<feature type="sequence conflict" description="In Ref. 1; AAB48182." evidence="6" ref="1">
    <original>E</original>
    <variation>D</variation>
    <location>
        <position position="213"/>
    </location>
</feature>
<feature type="sequence conflict" description="In Ref. 1; AAB48182." evidence="6" ref="1">
    <original>A</original>
    <variation>P</variation>
    <location>
        <position position="217"/>
    </location>
</feature>
<feature type="sequence conflict" description="In Ref. 1; AAB48182." evidence="6" ref="1">
    <original>L</original>
    <variation>F</variation>
    <location>
        <position position="231"/>
    </location>
</feature>
<feature type="sequence conflict" description="In Ref. 1; AAB48182." evidence="6" ref="1">
    <original>A</original>
    <variation>S</variation>
    <location>
        <position position="258"/>
    </location>
</feature>
<feature type="sequence conflict" description="In Ref. 1; AAB48182." evidence="6" ref="1">
    <original>A</original>
    <variation>G</variation>
    <location>
        <position position="273"/>
    </location>
</feature>
<feature type="sequence conflict" description="In Ref. 1; AAB48182." evidence="6" ref="1">
    <original>T</original>
    <variation>P</variation>
    <location>
        <position position="398"/>
    </location>
</feature>
<evidence type="ECO:0000255" key="1"/>
<evidence type="ECO:0000269" key="2">
    <source>
    </source>
</evidence>
<evidence type="ECO:0000269" key="3">
    <source>
    </source>
</evidence>
<evidence type="ECO:0000269" key="4">
    <source>
    </source>
</evidence>
<evidence type="ECO:0000303" key="5">
    <source>
    </source>
</evidence>
<evidence type="ECO:0000305" key="6"/>
<protein>
    <recommendedName>
        <fullName evidence="5">Sensor histidine kinase/phosphatase LytS</fullName>
        <ecNumber evidence="4">2.7.13.3</ecNumber>
        <ecNumber evidence="4">3.1.3.-</ecNumber>
    </recommendedName>
    <alternativeName>
        <fullName>Autolysin sensor kinase</fullName>
    </alternativeName>
</protein>
<name>LYTS_STAA8</name>
<comment type="function">
    <text evidence="2 3 4">Member of the two-component regulatory system LytR/LytS that regulates genes involved in autolysis, programmed cell death, biofilm formation and cell wall metabolism (PubMed:19502411). Also participates in sensing and responding to host defense cationic antimicrobial peptides (CAMPs) (PubMed:23733465). Functions as a sensor protein kinase which is autophosphorylated at a histidine residue and transfers its phosphate group to the conserved aspartic acid residue in the regulatory domain of LytR (PubMed:25491472). In turn, LytR binds to the upstream promoter regions of target genes including lrgA and lrgB, to positively regulate their expression. Also possesses a phosphatase activity that dephosphorylates and thus inactivates LytR (PubMed:25491472).</text>
</comment>
<comment type="catalytic activity">
    <reaction evidence="4">
        <text>ATP + protein L-histidine = ADP + protein N-phospho-L-histidine.</text>
        <dbReference type="EC" id="2.7.13.3"/>
    </reaction>
</comment>
<comment type="subcellular location">
    <subcellularLocation>
        <location evidence="6">Cell membrane</location>
        <topology evidence="6">Multi-pass membrane protein</topology>
    </subcellularLocation>
</comment>
<comment type="PTM">
    <text evidence="4">Autophosphorylated on His-390.</text>
</comment>
<comment type="disruption phenotype">
    <text evidence="3">Deletion significantly reduces target tissue survival during calcium-daptomycin treatment and increases susceptibility to host defense cationic antimicrobial peptides.</text>
</comment>
<comment type="sequence caution" evidence="6">
    <conflict type="erroneous initiation">
        <sequence resource="EMBL-CDS" id="ABD29405"/>
    </conflict>
</comment>
<proteinExistence type="evidence at protein level"/>
<dbReference type="EC" id="2.7.13.3" evidence="4"/>
<dbReference type="EC" id="3.1.3.-" evidence="4"/>
<dbReference type="EMBL" id="L42945">
    <property type="protein sequence ID" value="AAB48182.1"/>
    <property type="molecule type" value="Genomic_DNA"/>
</dbReference>
<dbReference type="EMBL" id="CP000253">
    <property type="protein sequence ID" value="ABD29405.1"/>
    <property type="status" value="ALT_INIT"/>
    <property type="molecule type" value="Genomic_DNA"/>
</dbReference>
<dbReference type="EMBL" id="U57060">
    <property type="protein sequence ID" value="AAB81288.1"/>
    <property type="molecule type" value="Genomic_DNA"/>
</dbReference>
<dbReference type="RefSeq" id="WP_000925394.1">
    <property type="nucleotide sequence ID" value="NC_007795.1"/>
</dbReference>
<dbReference type="RefSeq" id="WP_000950281.1">
    <property type="nucleotide sequence ID" value="NZ_LS483365.1"/>
</dbReference>
<dbReference type="RefSeq" id="YP_498825.1">
    <property type="nucleotide sequence ID" value="NC_007795.1"/>
</dbReference>
<dbReference type="SMR" id="Q53705"/>
<dbReference type="STRING" id="93061.SAOUHSC_00230"/>
<dbReference type="iPTMnet" id="Q53705"/>
<dbReference type="PaxDb" id="1280-SAXN108_0240"/>
<dbReference type="GeneID" id="3920305"/>
<dbReference type="KEGG" id="sao:SAOUHSC_00230"/>
<dbReference type="PATRIC" id="fig|93061.5.peg.211"/>
<dbReference type="eggNOG" id="COG3275">
    <property type="taxonomic scope" value="Bacteria"/>
</dbReference>
<dbReference type="HOGENOM" id="CLU_020473_3_3_9"/>
<dbReference type="OrthoDB" id="9776552at2"/>
<dbReference type="Proteomes" id="UP000008816">
    <property type="component" value="Chromosome"/>
</dbReference>
<dbReference type="GO" id="GO:0005886">
    <property type="term" value="C:plasma membrane"/>
    <property type="evidence" value="ECO:0000318"/>
    <property type="project" value="GO_Central"/>
</dbReference>
<dbReference type="GO" id="GO:0005524">
    <property type="term" value="F:ATP binding"/>
    <property type="evidence" value="ECO:0007669"/>
    <property type="project" value="UniProtKB-KW"/>
</dbReference>
<dbReference type="GO" id="GO:0016787">
    <property type="term" value="F:hydrolase activity"/>
    <property type="evidence" value="ECO:0007669"/>
    <property type="project" value="UniProtKB-KW"/>
</dbReference>
<dbReference type="GO" id="GO:0000155">
    <property type="term" value="F:phosphorelay sensor kinase activity"/>
    <property type="evidence" value="ECO:0000318"/>
    <property type="project" value="GO_Central"/>
</dbReference>
<dbReference type="GO" id="GO:0071555">
    <property type="term" value="P:cell wall organization"/>
    <property type="evidence" value="ECO:0007669"/>
    <property type="project" value="InterPro"/>
</dbReference>
<dbReference type="GO" id="GO:0007165">
    <property type="term" value="P:signal transduction"/>
    <property type="evidence" value="ECO:0000318"/>
    <property type="project" value="GO_Central"/>
</dbReference>
<dbReference type="CDD" id="cd16957">
    <property type="entry name" value="HATPase_LytS-like"/>
    <property type="match status" value="1"/>
</dbReference>
<dbReference type="Gene3D" id="1.10.1760.20">
    <property type="match status" value="1"/>
</dbReference>
<dbReference type="Gene3D" id="3.30.450.40">
    <property type="match status" value="1"/>
</dbReference>
<dbReference type="Gene3D" id="3.30.565.10">
    <property type="entry name" value="Histidine kinase-like ATPase, C-terminal domain"/>
    <property type="match status" value="1"/>
</dbReference>
<dbReference type="InterPro" id="IPR050640">
    <property type="entry name" value="Bact_2-comp_sensor_kinase"/>
</dbReference>
<dbReference type="InterPro" id="IPR003018">
    <property type="entry name" value="GAF"/>
</dbReference>
<dbReference type="InterPro" id="IPR029016">
    <property type="entry name" value="GAF-like_dom_sf"/>
</dbReference>
<dbReference type="InterPro" id="IPR036890">
    <property type="entry name" value="HATPase_C_sf"/>
</dbReference>
<dbReference type="InterPro" id="IPR010559">
    <property type="entry name" value="Sig_transdc_His_kin_internal"/>
</dbReference>
<dbReference type="InterPro" id="IPR011620">
    <property type="entry name" value="Sig_transdc_His_kinase_LytS_TM"/>
</dbReference>
<dbReference type="PANTHER" id="PTHR34220">
    <property type="entry name" value="SENSOR HISTIDINE KINASE YPDA"/>
    <property type="match status" value="1"/>
</dbReference>
<dbReference type="PANTHER" id="PTHR34220:SF7">
    <property type="entry name" value="SENSOR HISTIDINE KINASE YPDA"/>
    <property type="match status" value="1"/>
</dbReference>
<dbReference type="Pfam" id="PF07694">
    <property type="entry name" value="5TM-5TMR_LYT"/>
    <property type="match status" value="1"/>
</dbReference>
<dbReference type="Pfam" id="PF02518">
    <property type="entry name" value="HATPase_c"/>
    <property type="match status" value="1"/>
</dbReference>
<dbReference type="Pfam" id="PF06580">
    <property type="entry name" value="His_kinase"/>
    <property type="match status" value="1"/>
</dbReference>
<dbReference type="SMART" id="SM00065">
    <property type="entry name" value="GAF"/>
    <property type="match status" value="1"/>
</dbReference>
<dbReference type="SMART" id="SM00387">
    <property type="entry name" value="HATPase_c"/>
    <property type="match status" value="1"/>
</dbReference>
<dbReference type="SUPFAM" id="SSF55874">
    <property type="entry name" value="ATPase domain of HSP90 chaperone/DNA topoisomerase II/histidine kinase"/>
    <property type="match status" value="1"/>
</dbReference>
<dbReference type="SUPFAM" id="SSF55781">
    <property type="entry name" value="GAF domain-like"/>
    <property type="match status" value="1"/>
</dbReference>
<keyword id="KW-0067">ATP-binding</keyword>
<keyword id="KW-1003">Cell membrane</keyword>
<keyword id="KW-0378">Hydrolase</keyword>
<keyword id="KW-0418">Kinase</keyword>
<keyword id="KW-0472">Membrane</keyword>
<keyword id="KW-0547">Nucleotide-binding</keyword>
<keyword id="KW-0597">Phosphoprotein</keyword>
<keyword id="KW-1185">Reference proteome</keyword>
<keyword id="KW-0808">Transferase</keyword>
<keyword id="KW-0812">Transmembrane</keyword>
<keyword id="KW-1133">Transmembrane helix</keyword>
<keyword id="KW-0902">Two-component regulatory system</keyword>
<gene>
    <name type="primary">lytS</name>
    <name type="ordered locus">SAOUHSC_00230</name>
</gene>
<organism>
    <name type="scientific">Staphylococcus aureus (strain NCTC 8325 / PS 47)</name>
    <dbReference type="NCBI Taxonomy" id="93061"/>
    <lineage>
        <taxon>Bacteria</taxon>
        <taxon>Bacillati</taxon>
        <taxon>Bacillota</taxon>
        <taxon>Bacilli</taxon>
        <taxon>Bacillales</taxon>
        <taxon>Staphylococcaceae</taxon>
        <taxon>Staphylococcus</taxon>
    </lineage>
</organism>
<sequence>MLSLTMLLLERVGLIIILAYVLMNIPYFKNLMNRRRTWKARWQLCIIFSLFALMSNLTGIVIDHQHSLSGSVYFRLDDDVSLANTRVLTIGVAGLVGGPFVGLFVGVISGIFRVYMGGADAQVYLISSIFIGIIAGYFGLQAQRRKRYPSIAKSAMIGIVMEMIQMLSILTFSHDKAYAVDLISLIALPMIIVNSVGTAIFMSIIISTLKQEEQMKAVQTHDVLQLMNQTLPYFKEGLNRESAQQIAMIIKNLMKVSAVAITSKNEILSHVGAGSDHHIPTNEILTSLSKDVLKSGKLKEVHTKEEIGCSHPNCPLRAAIVIPLEMHGSIVGTLKMYFTNPNDLTFVERQLAEGLANIFSSQIELGEAETQSKLLKDAEIKSLQAQVSPHFFFNSINTISALVRINSEKARELLLELSYFFRANLQGSKQHTITLDKELSQVRAYLSLEQARYPGRFNININVEDKYRDVLVPPFLIQILVENAIKHAFTNRKQGNDIDVSVIKETATHVRIIVQDNGQGISKDKMHLLGETSVESESGTGSALENLNLRLKGLFGKSAALQFESTSSGTTFWCVLPYERQEEE</sequence>
<reference key="1">
    <citation type="journal article" date="1996" name="J. Bacteriol.">
        <title>Identification and molecular characterization of a putative regulatory locus that affects autolysis in Staphylococcus aureus.</title>
        <authorList>
            <person name="Brunskill E.W."/>
            <person name="Bayles K.W."/>
        </authorList>
    </citation>
    <scope>NUCLEOTIDE SEQUENCE [GENOMIC DNA]</scope>
</reference>
<reference key="2">
    <citation type="book" date="2006" name="Gram positive pathogens, 2nd edition">
        <title>The Staphylococcus aureus NCTC 8325 genome.</title>
        <editorList>
            <person name="Fischetti V."/>
            <person name="Novick R."/>
            <person name="Ferretti J."/>
            <person name="Portnoy D."/>
            <person name="Rood J."/>
        </editorList>
        <authorList>
            <person name="Gillaspy A.F."/>
            <person name="Worrell V."/>
            <person name="Orvis J."/>
            <person name="Roe B.A."/>
            <person name="Dyer D.W."/>
            <person name="Iandolo J.J."/>
        </authorList>
    </citation>
    <scope>NUCLEOTIDE SEQUENCE [LARGE SCALE GENOMIC DNA]</scope>
    <source>
        <strain>NCTC 8325 / PS 47</strain>
    </source>
</reference>
<reference key="3">
    <citation type="journal article" date="1997" name="Microbiology">
        <title>The Staphylococcus aureus scdA gene: a novel locus that affects cell division and morphogenesis.</title>
        <authorList>
            <person name="Brunskill E.W."/>
            <person name="de Jonge B.L.M."/>
            <person name="Bayles K.W."/>
        </authorList>
    </citation>
    <scope>NUCLEOTIDE SEQUENCE [GENOMIC DNA] OF 1-23</scope>
</reference>
<reference key="4">
    <citation type="journal article" date="2009" name="J. Bacteriol.">
        <title>The Staphylococcus aureus LytSR two-component regulatory system affects biofilm formation.</title>
        <authorList>
            <person name="Sharma-Kuinkel B.K."/>
            <person name="Mann E.E."/>
            <person name="Ahn J.S."/>
            <person name="Kuechenmeister L.J."/>
            <person name="Dunman P.M."/>
            <person name="Bayles K.W."/>
        </authorList>
    </citation>
    <scope>FUNCTION</scope>
    <source>
        <strain>UAMS-1</strain>
    </source>
</reference>
<reference key="5">
    <citation type="journal article" date="2013" name="Antimicrob. Agents Chemother.">
        <title>Role of the LytSR two-component regulatory system in adaptation to cationic antimicrobial peptides in Staphylococcus aureus.</title>
        <authorList>
            <person name="Yang S.J."/>
            <person name="Xiong Y.Q."/>
            <person name="Yeaman M.R."/>
            <person name="Bayles K.W."/>
            <person name="Abdelhady W."/>
            <person name="Bayer A.S."/>
        </authorList>
    </citation>
    <scope>FUNCTION</scope>
    <scope>DISRUPTION PHENOTYPE</scope>
    <source>
        <strain>UAMS-1</strain>
    </source>
</reference>
<reference key="6">
    <citation type="journal article" date="2015" name="Mol. Microbiol.">
        <title>Identification of the amino acids essential for LytSR-mediated signal transduction in Staphylococcus aureus and their roles in biofilm-specific gene expression.</title>
        <authorList>
            <person name="Lehman M.K."/>
            <person name="Bose J.L."/>
            <person name="Sharma-Kuinkel B.K."/>
            <person name="Moormeier D.E."/>
            <person name="Endres J.L."/>
            <person name="Sadykov M.R."/>
            <person name="Biswas I."/>
            <person name="Bayles K.W."/>
        </authorList>
    </citation>
    <scope>FUNCTION</scope>
    <scope>MUTAGENESIS OF HIS-390 AND ASN-394</scope>
    <scope>CATALYTIC ACTIVITY</scope>
    <scope>AUTOPHOSPHORYLATION</scope>
    <scope>PHOSPHORYLATION AT HIS-390</scope>
    <source>
        <strain>UAMS-1</strain>
    </source>
</reference>